<comment type="similarity">
    <text evidence="1">Belongs to the UPF0102 family.</text>
</comment>
<gene>
    <name type="ordered locus">Acid_2433</name>
</gene>
<organism>
    <name type="scientific">Solibacter usitatus (strain Ellin6076)</name>
    <dbReference type="NCBI Taxonomy" id="234267"/>
    <lineage>
        <taxon>Bacteria</taxon>
        <taxon>Pseudomonadati</taxon>
        <taxon>Acidobacteriota</taxon>
        <taxon>Terriglobia</taxon>
        <taxon>Bryobacterales</taxon>
        <taxon>Solibacteraceae</taxon>
        <taxon>Candidatus Solibacter</taxon>
    </lineage>
</organism>
<evidence type="ECO:0000255" key="1">
    <source>
        <dbReference type="HAMAP-Rule" id="MF_00048"/>
    </source>
</evidence>
<sequence length="132" mass="15133">MIGLLYRAADRLRRRRYPENHGRIGEDLAHRYLRSQGCTVVARNYRTLAGTGEIDLVVWDGGRLAFVEVKTRSSTDFGPPESAVDAEKRDRLRTAARDYVRRADVDWKAVRFDIVSVILQASPKIEWLRGAF</sequence>
<protein>
    <recommendedName>
        <fullName evidence="1">UPF0102 protein Acid_2433</fullName>
    </recommendedName>
</protein>
<reference key="1">
    <citation type="journal article" date="2009" name="Appl. Environ. Microbiol.">
        <title>Three genomes from the phylum Acidobacteria provide insight into the lifestyles of these microorganisms in soils.</title>
        <authorList>
            <person name="Ward N.L."/>
            <person name="Challacombe J.F."/>
            <person name="Janssen P.H."/>
            <person name="Henrissat B."/>
            <person name="Coutinho P.M."/>
            <person name="Wu M."/>
            <person name="Xie G."/>
            <person name="Haft D.H."/>
            <person name="Sait M."/>
            <person name="Badger J."/>
            <person name="Barabote R.D."/>
            <person name="Bradley B."/>
            <person name="Brettin T.S."/>
            <person name="Brinkac L.M."/>
            <person name="Bruce D."/>
            <person name="Creasy T."/>
            <person name="Daugherty S.C."/>
            <person name="Davidsen T.M."/>
            <person name="DeBoy R.T."/>
            <person name="Detter J.C."/>
            <person name="Dodson R.J."/>
            <person name="Durkin A.S."/>
            <person name="Ganapathy A."/>
            <person name="Gwinn-Giglio M."/>
            <person name="Han C.S."/>
            <person name="Khouri H."/>
            <person name="Kiss H."/>
            <person name="Kothari S.P."/>
            <person name="Madupu R."/>
            <person name="Nelson K.E."/>
            <person name="Nelson W.C."/>
            <person name="Paulsen I."/>
            <person name="Penn K."/>
            <person name="Ren Q."/>
            <person name="Rosovitz M.J."/>
            <person name="Selengut J.D."/>
            <person name="Shrivastava S."/>
            <person name="Sullivan S.A."/>
            <person name="Tapia R."/>
            <person name="Thompson L.S."/>
            <person name="Watkins K.L."/>
            <person name="Yang Q."/>
            <person name="Yu C."/>
            <person name="Zafar N."/>
            <person name="Zhou L."/>
            <person name="Kuske C.R."/>
        </authorList>
    </citation>
    <scope>NUCLEOTIDE SEQUENCE [LARGE SCALE GENOMIC DNA]</scope>
    <source>
        <strain>Ellin6076</strain>
    </source>
</reference>
<name>Y2433_SOLUE</name>
<accession>Q025A4</accession>
<dbReference type="EMBL" id="CP000473">
    <property type="protein sequence ID" value="ABJ83422.1"/>
    <property type="molecule type" value="Genomic_DNA"/>
</dbReference>
<dbReference type="SMR" id="Q025A4"/>
<dbReference type="FunCoup" id="Q025A4">
    <property type="interactions" value="297"/>
</dbReference>
<dbReference type="STRING" id="234267.Acid_2433"/>
<dbReference type="KEGG" id="sus:Acid_2433"/>
<dbReference type="eggNOG" id="COG0792">
    <property type="taxonomic scope" value="Bacteria"/>
</dbReference>
<dbReference type="HOGENOM" id="CLU_115353_2_1_0"/>
<dbReference type="InParanoid" id="Q025A4"/>
<dbReference type="OrthoDB" id="9802516at2"/>
<dbReference type="GO" id="GO:0003676">
    <property type="term" value="F:nucleic acid binding"/>
    <property type="evidence" value="ECO:0007669"/>
    <property type="project" value="InterPro"/>
</dbReference>
<dbReference type="CDD" id="cd20736">
    <property type="entry name" value="PoNe_Nuclease"/>
    <property type="match status" value="1"/>
</dbReference>
<dbReference type="Gene3D" id="3.40.1350.10">
    <property type="match status" value="1"/>
</dbReference>
<dbReference type="HAMAP" id="MF_00048">
    <property type="entry name" value="UPF0102"/>
    <property type="match status" value="1"/>
</dbReference>
<dbReference type="InterPro" id="IPR011335">
    <property type="entry name" value="Restrct_endonuc-II-like"/>
</dbReference>
<dbReference type="InterPro" id="IPR011856">
    <property type="entry name" value="tRNA_endonuc-like_dom_sf"/>
</dbReference>
<dbReference type="InterPro" id="IPR003509">
    <property type="entry name" value="UPF0102_YraN-like"/>
</dbReference>
<dbReference type="NCBIfam" id="NF009150">
    <property type="entry name" value="PRK12497.1-3"/>
    <property type="match status" value="1"/>
</dbReference>
<dbReference type="NCBIfam" id="NF009154">
    <property type="entry name" value="PRK12497.3-3"/>
    <property type="match status" value="1"/>
</dbReference>
<dbReference type="PANTHER" id="PTHR34039">
    <property type="entry name" value="UPF0102 PROTEIN YRAN"/>
    <property type="match status" value="1"/>
</dbReference>
<dbReference type="PANTHER" id="PTHR34039:SF1">
    <property type="entry name" value="UPF0102 PROTEIN YRAN"/>
    <property type="match status" value="1"/>
</dbReference>
<dbReference type="Pfam" id="PF02021">
    <property type="entry name" value="UPF0102"/>
    <property type="match status" value="1"/>
</dbReference>
<dbReference type="SUPFAM" id="SSF52980">
    <property type="entry name" value="Restriction endonuclease-like"/>
    <property type="match status" value="1"/>
</dbReference>
<feature type="chain" id="PRO_0000336264" description="UPF0102 protein Acid_2433">
    <location>
        <begin position="1"/>
        <end position="132"/>
    </location>
</feature>
<proteinExistence type="inferred from homology"/>